<sequence>MNIRNDVQKALQHLFGRTAVPQETSKVNEALNGEKRLLLGKVLRLLGDQHALIQVGNQTVQGKLETQLRPQAYYWFSYEKKTAEQTGRLQVVQSFDQNPKTIQDAAGKLLNAISVKTSNAALMMTGAMLKSKTPVTENDIKTAVRWMDTLPSQDTKKAVETVLFALKRDLPIHSEILNGVHAVKSPVPLHQHVSQLLQAIDQNPQQSQMMSKLKEAVTVLLNSEIDVHAERLIDKLISLTDNTKAPSPTNTAGSRELSTPAGSPGKASLPIANHTAEQGSIQEEPVKTAADIPIKEARQLLVKLTESAEKNSLQIVKEAANWIKAAASSGDSKSLAASAVLQAAQVTDQEAEVFLKAVQQTAPHLADKADVLSFLSKVKTAIGARDEVAFIKAFEQGSAVTSGEMQSIKLALSALRASHEVAEPVKQEADQLFHKLNGQLFMQQDHPSYSQIVMSFPMFSKSGVQDMTVLFKGKKEADGKLDPSHCRLLFLLQLDTLKETVVDCLVQQKVMTITIETDFELQAAIDPMVPALKQGLKEMGYSLSGVNAKKRVHTEEKASIDQYITSISDQEVDVKI</sequence>
<proteinExistence type="predicted"/>
<evidence type="ECO:0000256" key="1">
    <source>
        <dbReference type="SAM" id="MobiDB-lite"/>
    </source>
</evidence>
<reference key="1">
    <citation type="journal article" date="1997" name="Nature">
        <title>The complete genome sequence of the Gram-positive bacterium Bacillus subtilis.</title>
        <authorList>
            <person name="Kunst F."/>
            <person name="Ogasawara N."/>
            <person name="Moszer I."/>
            <person name="Albertini A.M."/>
            <person name="Alloni G."/>
            <person name="Azevedo V."/>
            <person name="Bertero M.G."/>
            <person name="Bessieres P."/>
            <person name="Bolotin A."/>
            <person name="Borchert S."/>
            <person name="Borriss R."/>
            <person name="Boursier L."/>
            <person name="Brans A."/>
            <person name="Braun M."/>
            <person name="Brignell S.C."/>
            <person name="Bron S."/>
            <person name="Brouillet S."/>
            <person name="Bruschi C.V."/>
            <person name="Caldwell B."/>
            <person name="Capuano V."/>
            <person name="Carter N.M."/>
            <person name="Choi S.-K."/>
            <person name="Codani J.-J."/>
            <person name="Connerton I.F."/>
            <person name="Cummings N.J."/>
            <person name="Daniel R.A."/>
            <person name="Denizot F."/>
            <person name="Devine K.M."/>
            <person name="Duesterhoeft A."/>
            <person name="Ehrlich S.D."/>
            <person name="Emmerson P.T."/>
            <person name="Entian K.-D."/>
            <person name="Errington J."/>
            <person name="Fabret C."/>
            <person name="Ferrari E."/>
            <person name="Foulger D."/>
            <person name="Fritz C."/>
            <person name="Fujita M."/>
            <person name="Fujita Y."/>
            <person name="Fuma S."/>
            <person name="Galizzi A."/>
            <person name="Galleron N."/>
            <person name="Ghim S.-Y."/>
            <person name="Glaser P."/>
            <person name="Goffeau A."/>
            <person name="Golightly E.J."/>
            <person name="Grandi G."/>
            <person name="Guiseppi G."/>
            <person name="Guy B.J."/>
            <person name="Haga K."/>
            <person name="Haiech J."/>
            <person name="Harwood C.R."/>
            <person name="Henaut A."/>
            <person name="Hilbert H."/>
            <person name="Holsappel S."/>
            <person name="Hosono S."/>
            <person name="Hullo M.-F."/>
            <person name="Itaya M."/>
            <person name="Jones L.-M."/>
            <person name="Joris B."/>
            <person name="Karamata D."/>
            <person name="Kasahara Y."/>
            <person name="Klaerr-Blanchard M."/>
            <person name="Klein C."/>
            <person name="Kobayashi Y."/>
            <person name="Koetter P."/>
            <person name="Koningstein G."/>
            <person name="Krogh S."/>
            <person name="Kumano M."/>
            <person name="Kurita K."/>
            <person name="Lapidus A."/>
            <person name="Lardinois S."/>
            <person name="Lauber J."/>
            <person name="Lazarevic V."/>
            <person name="Lee S.-M."/>
            <person name="Levine A."/>
            <person name="Liu H."/>
            <person name="Masuda S."/>
            <person name="Mauel C."/>
            <person name="Medigue C."/>
            <person name="Medina N."/>
            <person name="Mellado R.P."/>
            <person name="Mizuno M."/>
            <person name="Moestl D."/>
            <person name="Nakai S."/>
            <person name="Noback M."/>
            <person name="Noone D."/>
            <person name="O'Reilly M."/>
            <person name="Ogawa K."/>
            <person name="Ogiwara A."/>
            <person name="Oudega B."/>
            <person name="Park S.-H."/>
            <person name="Parro V."/>
            <person name="Pohl T.M."/>
            <person name="Portetelle D."/>
            <person name="Porwollik S."/>
            <person name="Prescott A.M."/>
            <person name="Presecan E."/>
            <person name="Pujic P."/>
            <person name="Purnelle B."/>
            <person name="Rapoport G."/>
            <person name="Rey M."/>
            <person name="Reynolds S."/>
            <person name="Rieger M."/>
            <person name="Rivolta C."/>
            <person name="Rocha E."/>
            <person name="Roche B."/>
            <person name="Rose M."/>
            <person name="Sadaie Y."/>
            <person name="Sato T."/>
            <person name="Scanlan E."/>
            <person name="Schleich S."/>
            <person name="Schroeter R."/>
            <person name="Scoffone F."/>
            <person name="Sekiguchi J."/>
            <person name="Sekowska A."/>
            <person name="Seror S.J."/>
            <person name="Serror P."/>
            <person name="Shin B.-S."/>
            <person name="Soldo B."/>
            <person name="Sorokin A."/>
            <person name="Tacconi E."/>
            <person name="Takagi T."/>
            <person name="Takahashi H."/>
            <person name="Takemaru K."/>
            <person name="Takeuchi M."/>
            <person name="Tamakoshi A."/>
            <person name="Tanaka T."/>
            <person name="Terpstra P."/>
            <person name="Tognoni A."/>
            <person name="Tosato V."/>
            <person name="Uchiyama S."/>
            <person name="Vandenbol M."/>
            <person name="Vannier F."/>
            <person name="Vassarotti A."/>
            <person name="Viari A."/>
            <person name="Wambutt R."/>
            <person name="Wedler E."/>
            <person name="Wedler H."/>
            <person name="Weitzenegger T."/>
            <person name="Winters P."/>
            <person name="Wipat A."/>
            <person name="Yamamoto H."/>
            <person name="Yamane K."/>
            <person name="Yasumoto K."/>
            <person name="Yata K."/>
            <person name="Yoshida K."/>
            <person name="Yoshikawa H.-F."/>
            <person name="Zumstein E."/>
            <person name="Yoshikawa H."/>
            <person name="Danchin A."/>
        </authorList>
    </citation>
    <scope>NUCLEOTIDE SEQUENCE [LARGE SCALE GENOMIC DNA]</scope>
    <source>
        <strain>168</strain>
    </source>
</reference>
<feature type="chain" id="PRO_0000360738" description="Uncharacterized protein YlqG">
    <location>
        <begin position="1"/>
        <end position="576"/>
    </location>
</feature>
<feature type="region of interest" description="Disordered" evidence="1">
    <location>
        <begin position="241"/>
        <end position="270"/>
    </location>
</feature>
<feature type="compositionally biased region" description="Polar residues" evidence="1">
    <location>
        <begin position="241"/>
        <end position="261"/>
    </location>
</feature>
<dbReference type="EMBL" id="AL009126">
    <property type="protein sequence ID" value="CAB13480.1"/>
    <property type="molecule type" value="Genomic_DNA"/>
</dbReference>
<dbReference type="PIR" id="G69880">
    <property type="entry name" value="G69880"/>
</dbReference>
<dbReference type="RefSeq" id="NP_389489.1">
    <property type="nucleotide sequence ID" value="NC_000964.3"/>
</dbReference>
<dbReference type="RefSeq" id="WP_003245096.1">
    <property type="nucleotide sequence ID" value="NZ_OZ025638.1"/>
</dbReference>
<dbReference type="SMR" id="O31745"/>
<dbReference type="FunCoup" id="O31745">
    <property type="interactions" value="77"/>
</dbReference>
<dbReference type="STRING" id="224308.BSU16070"/>
<dbReference type="PaxDb" id="224308-BSU16070"/>
<dbReference type="EnsemblBacteria" id="CAB13480">
    <property type="protein sequence ID" value="CAB13480"/>
    <property type="gene ID" value="BSU_16070"/>
</dbReference>
<dbReference type="GeneID" id="936698"/>
<dbReference type="KEGG" id="bsu:BSU16070"/>
<dbReference type="PATRIC" id="fig|224308.179.peg.1747"/>
<dbReference type="eggNOG" id="ENOG502Z7RX">
    <property type="taxonomic scope" value="Bacteria"/>
</dbReference>
<dbReference type="InParanoid" id="O31745"/>
<dbReference type="OrthoDB" id="2351076at2"/>
<dbReference type="BioCyc" id="BSUB:BSU16070-MONOMER"/>
<dbReference type="Proteomes" id="UP000001570">
    <property type="component" value="Chromosome"/>
</dbReference>
<accession>O31745</accession>
<name>YLQG_BACSU</name>
<protein>
    <recommendedName>
        <fullName>Uncharacterized protein YlqG</fullName>
    </recommendedName>
</protein>
<gene>
    <name type="primary">ylqG</name>
    <name type="ordered locus">BSU16070</name>
</gene>
<keyword id="KW-1185">Reference proteome</keyword>
<organism>
    <name type="scientific">Bacillus subtilis (strain 168)</name>
    <dbReference type="NCBI Taxonomy" id="224308"/>
    <lineage>
        <taxon>Bacteria</taxon>
        <taxon>Bacillati</taxon>
        <taxon>Bacillota</taxon>
        <taxon>Bacilli</taxon>
        <taxon>Bacillales</taxon>
        <taxon>Bacillaceae</taxon>
        <taxon>Bacillus</taxon>
    </lineage>
</organism>